<organism>
    <name type="scientific">Streptomyces coelicolor (strain ATCC BAA-471 / A3(2) / M145)</name>
    <dbReference type="NCBI Taxonomy" id="100226"/>
    <lineage>
        <taxon>Bacteria</taxon>
        <taxon>Bacillati</taxon>
        <taxon>Actinomycetota</taxon>
        <taxon>Actinomycetes</taxon>
        <taxon>Kitasatosporales</taxon>
        <taxon>Streptomycetaceae</taxon>
        <taxon>Streptomyces</taxon>
        <taxon>Streptomyces albidoflavus group</taxon>
    </lineage>
</organism>
<name>RL29_STRCO</name>
<accession>Q9L0D2</accession>
<comment type="similarity">
    <text evidence="1">Belongs to the universal ribosomal protein uL29 family.</text>
</comment>
<evidence type="ECO:0000305" key="1"/>
<feature type="chain" id="PRO_0000130466" description="Large ribosomal subunit protein uL29">
    <location>
        <begin position="1"/>
        <end position="74"/>
    </location>
</feature>
<dbReference type="EMBL" id="AL939121">
    <property type="protein sequence ID" value="CAB82078.1"/>
    <property type="molecule type" value="Genomic_DNA"/>
</dbReference>
<dbReference type="RefSeq" id="NP_628869.1">
    <property type="nucleotide sequence ID" value="NC_003888.3"/>
</dbReference>
<dbReference type="RefSeq" id="WP_003974259.1">
    <property type="nucleotide sequence ID" value="NZ_VNID01000016.1"/>
</dbReference>
<dbReference type="SMR" id="Q9L0D2"/>
<dbReference type="FunCoup" id="Q9L0D2">
    <property type="interactions" value="107"/>
</dbReference>
<dbReference type="STRING" id="100226.gene:17762359"/>
<dbReference type="PaxDb" id="100226-SCO4710"/>
<dbReference type="GeneID" id="97462950"/>
<dbReference type="KEGG" id="sco:SCO4710"/>
<dbReference type="PATRIC" id="fig|100226.15.peg.4781"/>
<dbReference type="eggNOG" id="COG0255">
    <property type="taxonomic scope" value="Bacteria"/>
</dbReference>
<dbReference type="HOGENOM" id="CLU_158491_3_3_11"/>
<dbReference type="InParanoid" id="Q9L0D2"/>
<dbReference type="OrthoDB" id="9815192at2"/>
<dbReference type="PhylomeDB" id="Q9L0D2"/>
<dbReference type="PRO" id="PR:Q9L0D2"/>
<dbReference type="Proteomes" id="UP000001973">
    <property type="component" value="Chromosome"/>
</dbReference>
<dbReference type="GO" id="GO:0022625">
    <property type="term" value="C:cytosolic large ribosomal subunit"/>
    <property type="evidence" value="ECO:0000318"/>
    <property type="project" value="GO_Central"/>
</dbReference>
<dbReference type="GO" id="GO:0003735">
    <property type="term" value="F:structural constituent of ribosome"/>
    <property type="evidence" value="ECO:0007669"/>
    <property type="project" value="InterPro"/>
</dbReference>
<dbReference type="GO" id="GO:0006412">
    <property type="term" value="P:translation"/>
    <property type="evidence" value="ECO:0007669"/>
    <property type="project" value="UniProtKB-UniRule"/>
</dbReference>
<dbReference type="CDD" id="cd00427">
    <property type="entry name" value="Ribosomal_L29_HIP"/>
    <property type="match status" value="1"/>
</dbReference>
<dbReference type="FunFam" id="1.10.287.310:FF:000001">
    <property type="entry name" value="50S ribosomal protein L29"/>
    <property type="match status" value="1"/>
</dbReference>
<dbReference type="Gene3D" id="1.10.287.310">
    <property type="match status" value="1"/>
</dbReference>
<dbReference type="HAMAP" id="MF_00374">
    <property type="entry name" value="Ribosomal_uL29"/>
    <property type="match status" value="1"/>
</dbReference>
<dbReference type="InterPro" id="IPR050063">
    <property type="entry name" value="Ribosomal_protein_uL29"/>
</dbReference>
<dbReference type="InterPro" id="IPR001854">
    <property type="entry name" value="Ribosomal_uL29"/>
</dbReference>
<dbReference type="InterPro" id="IPR018254">
    <property type="entry name" value="Ribosomal_uL29_CS"/>
</dbReference>
<dbReference type="InterPro" id="IPR036049">
    <property type="entry name" value="Ribosomal_uL29_sf"/>
</dbReference>
<dbReference type="NCBIfam" id="TIGR00012">
    <property type="entry name" value="L29"/>
    <property type="match status" value="1"/>
</dbReference>
<dbReference type="PANTHER" id="PTHR10916">
    <property type="entry name" value="60S RIBOSOMAL PROTEIN L35/50S RIBOSOMAL PROTEIN L29"/>
    <property type="match status" value="1"/>
</dbReference>
<dbReference type="PANTHER" id="PTHR10916:SF0">
    <property type="entry name" value="LARGE RIBOSOMAL SUBUNIT PROTEIN UL29C"/>
    <property type="match status" value="1"/>
</dbReference>
<dbReference type="Pfam" id="PF00831">
    <property type="entry name" value="Ribosomal_L29"/>
    <property type="match status" value="1"/>
</dbReference>
<dbReference type="SUPFAM" id="SSF46561">
    <property type="entry name" value="Ribosomal protein L29 (L29p)"/>
    <property type="match status" value="1"/>
</dbReference>
<dbReference type="PROSITE" id="PS00579">
    <property type="entry name" value="RIBOSOMAL_L29"/>
    <property type="match status" value="1"/>
</dbReference>
<gene>
    <name type="primary">rpmC</name>
    <name type="ordered locus">SCO4710</name>
    <name type="ORF">SCD31.35</name>
</gene>
<reference key="1">
    <citation type="journal article" date="2002" name="Nature">
        <title>Complete genome sequence of the model actinomycete Streptomyces coelicolor A3(2).</title>
        <authorList>
            <person name="Bentley S.D."/>
            <person name="Chater K.F."/>
            <person name="Cerdeno-Tarraga A.-M."/>
            <person name="Challis G.L."/>
            <person name="Thomson N.R."/>
            <person name="James K.D."/>
            <person name="Harris D.E."/>
            <person name="Quail M.A."/>
            <person name="Kieser H."/>
            <person name="Harper D."/>
            <person name="Bateman A."/>
            <person name="Brown S."/>
            <person name="Chandra G."/>
            <person name="Chen C.W."/>
            <person name="Collins M."/>
            <person name="Cronin A."/>
            <person name="Fraser A."/>
            <person name="Goble A."/>
            <person name="Hidalgo J."/>
            <person name="Hornsby T."/>
            <person name="Howarth S."/>
            <person name="Huang C.-H."/>
            <person name="Kieser T."/>
            <person name="Larke L."/>
            <person name="Murphy L.D."/>
            <person name="Oliver K."/>
            <person name="O'Neil S."/>
            <person name="Rabbinowitsch E."/>
            <person name="Rajandream M.A."/>
            <person name="Rutherford K.M."/>
            <person name="Rutter S."/>
            <person name="Seeger K."/>
            <person name="Saunders D."/>
            <person name="Sharp S."/>
            <person name="Squares R."/>
            <person name="Squares S."/>
            <person name="Taylor K."/>
            <person name="Warren T."/>
            <person name="Wietzorrek A."/>
            <person name="Woodward J.R."/>
            <person name="Barrell B.G."/>
            <person name="Parkhill J."/>
            <person name="Hopwood D.A."/>
        </authorList>
    </citation>
    <scope>NUCLEOTIDE SEQUENCE [LARGE SCALE GENOMIC DNA]</scope>
    <source>
        <strain>ATCC BAA-471 / A3(2) / M145</strain>
    </source>
</reference>
<protein>
    <recommendedName>
        <fullName evidence="1">Large ribosomal subunit protein uL29</fullName>
    </recommendedName>
    <alternativeName>
        <fullName>50S ribosomal protein L29</fullName>
    </alternativeName>
</protein>
<sequence length="74" mass="8402">MSAGTKASELRELGNEELLAKLREAKEELFNLRFQAATGQLENHGRLKAVRKDIARIYTLMRERELGIETVESA</sequence>
<proteinExistence type="inferred from homology"/>
<keyword id="KW-1185">Reference proteome</keyword>
<keyword id="KW-0687">Ribonucleoprotein</keyword>
<keyword id="KW-0689">Ribosomal protein</keyword>